<organism>
    <name type="scientific">Elizabethkingia meningoseptica</name>
    <name type="common">Chryseobacterium meningosepticum</name>
    <dbReference type="NCBI Taxonomy" id="238"/>
    <lineage>
        <taxon>Bacteria</taxon>
        <taxon>Pseudomonadati</taxon>
        <taxon>Bacteroidota</taxon>
        <taxon>Flavobacteriia</taxon>
        <taxon>Flavobacteriales</taxon>
        <taxon>Weeksellaceae</taxon>
        <taxon>Elizabethkingia</taxon>
    </lineage>
</organism>
<protein>
    <recommendedName>
        <fullName>Flavastacin</fullName>
        <ecNumber>3.4.24.76</ecNumber>
    </recommendedName>
</protein>
<feature type="signal peptide" evidence="1">
    <location>
        <begin position="1"/>
        <end position="15"/>
    </location>
</feature>
<feature type="propeptide" id="PRO_0000028875" description="Activation peptide">
    <location>
        <begin position="16"/>
        <end position="91"/>
    </location>
</feature>
<feature type="chain" id="PRO_0000028876" description="Flavastacin">
    <location>
        <begin position="92"/>
        <end position="443"/>
    </location>
</feature>
<feature type="domain" description="Peptidase M12A" evidence="3">
    <location>
        <begin position="92"/>
        <end position="289"/>
    </location>
</feature>
<feature type="domain" description="Ricin B-type lectin" evidence="2">
    <location>
        <begin position="297"/>
        <end position="440"/>
    </location>
</feature>
<feature type="active site" evidence="3">
    <location>
        <position position="190"/>
    </location>
</feature>
<feature type="binding site" evidence="3">
    <location>
        <position position="189"/>
    </location>
    <ligand>
        <name>Zn(2+)</name>
        <dbReference type="ChEBI" id="CHEBI:29105"/>
        <note>catalytic</note>
    </ligand>
</feature>
<feature type="binding site" evidence="3">
    <location>
        <position position="193"/>
    </location>
    <ligand>
        <name>Zn(2+)</name>
        <dbReference type="ChEBI" id="CHEBI:29105"/>
        <note>catalytic</note>
    </ligand>
</feature>
<feature type="binding site" evidence="3">
    <location>
        <position position="199"/>
    </location>
    <ligand>
        <name>Zn(2+)</name>
        <dbReference type="ChEBI" id="CHEBI:29105"/>
        <note>catalytic</note>
    </ligand>
</feature>
<feature type="glycosylation site" description="O-linked (Man...) serine" evidence="4">
    <location>
        <position position="355"/>
    </location>
</feature>
<sequence>MTRKLLILSGCLILALNSCKSDMETTPASSVDHTTTQLNGTTIHKLLINGAYTYVNEVNGEYFYADDITITAEQFNQLKRMANPDISTVERSTIVSSFIKTWPNATVYYTLPSQGSLSTQAYNTFLTNINKAFDMISSKTSVKFVQRTNQTEYITFTYSTGNSSPLGWVKNRVNGIKIYNTTYPAIIAHEIMHSMGIMHEQCRPDRDQYIIVDTNRAQDGTRHNFNLYNDYAGHGEFDFGSVMMYKSTDFAIDPNLPVMTKLDGSTFGKQRDGLSAGDYAGINHLYGPVNSTSATNGTYTLTTSLAGDKNIDITGSSTADGTDVILYSATTGNNQKFIFRKSEHGYFTIKSILDSTKVLTVRNNGTANGTAVELRTNADTDAQKWLLFNLGNEGFGFAPKNAPSLRLEVKDGLTTNLTPIVIGSTDQTLQPYTKQRFTLTKVN</sequence>
<comment type="function">
    <text>Zinc metallendopeptidase that cleaves preferentially on N-terminal side of aspartate-containing substrates.</text>
</comment>
<comment type="catalytic activity">
    <reaction>
        <text>Hydrolyzes polypeptides on the amino-side of Asp in -Xaa-|-Asp-. Acts very slowly on -Xaa-|-Glu.</text>
        <dbReference type="EC" id="3.4.24.76"/>
    </reaction>
</comment>
<comment type="cofactor">
    <cofactor evidence="3">
        <name>Zn(2+)</name>
        <dbReference type="ChEBI" id="CHEBI:29105"/>
    </cofactor>
    <text evidence="3">Binds 1 zinc ion per subunit.</text>
</comment>
<comment type="PTM">
    <text evidence="4">O-linked glycan consists of the Man, GlcNAc, GlcU, Glc, GlcU, Rha, Man heptasaccharide.</text>
</comment>
<keyword id="KW-0903">Direct protein sequencing</keyword>
<keyword id="KW-0325">Glycoprotein</keyword>
<keyword id="KW-0378">Hydrolase</keyword>
<keyword id="KW-0430">Lectin</keyword>
<keyword id="KW-0479">Metal-binding</keyword>
<keyword id="KW-0482">Metalloprotease</keyword>
<keyword id="KW-0645">Protease</keyword>
<keyword id="KW-0732">Signal</keyword>
<keyword id="KW-0862">Zinc</keyword>
<keyword id="KW-0865">Zymogen</keyword>
<accession>Q47899</accession>
<evidence type="ECO:0000255" key="1"/>
<evidence type="ECO:0000255" key="2">
    <source>
        <dbReference type="PROSITE-ProRule" id="PRU00174"/>
    </source>
</evidence>
<evidence type="ECO:0000255" key="3">
    <source>
        <dbReference type="PROSITE-ProRule" id="PRU01211"/>
    </source>
</evidence>
<evidence type="ECO:0000269" key="4">
    <source>
    </source>
</evidence>
<dbReference type="EC" id="3.4.24.76"/>
<dbReference type="EMBL" id="L37784">
    <property type="protein sequence ID" value="AAC41455.1"/>
    <property type="molecule type" value="Genomic_DNA"/>
</dbReference>
<dbReference type="PIR" id="S65963">
    <property type="entry name" value="S65963"/>
</dbReference>
<dbReference type="SMR" id="Q47899"/>
<dbReference type="CAZy" id="CBM13">
    <property type="family name" value="Carbohydrate-Binding Module Family 13"/>
</dbReference>
<dbReference type="MEROPS" id="M12.066"/>
<dbReference type="iPTMnet" id="Q47899"/>
<dbReference type="KEGG" id="ag:AAC41455"/>
<dbReference type="BRENDA" id="3.4.24.76">
    <property type="organism ID" value="1374"/>
</dbReference>
<dbReference type="GO" id="GO:0030246">
    <property type="term" value="F:carbohydrate binding"/>
    <property type="evidence" value="ECO:0007669"/>
    <property type="project" value="UniProtKB-KW"/>
</dbReference>
<dbReference type="GO" id="GO:0004222">
    <property type="term" value="F:metalloendopeptidase activity"/>
    <property type="evidence" value="ECO:0007669"/>
    <property type="project" value="InterPro"/>
</dbReference>
<dbReference type="GO" id="GO:0008270">
    <property type="term" value="F:zinc ion binding"/>
    <property type="evidence" value="ECO:0007669"/>
    <property type="project" value="InterPro"/>
</dbReference>
<dbReference type="GO" id="GO:0006508">
    <property type="term" value="P:proteolysis"/>
    <property type="evidence" value="ECO:0007669"/>
    <property type="project" value="UniProtKB-KW"/>
</dbReference>
<dbReference type="CDD" id="cd00161">
    <property type="entry name" value="beta-trefoil_Ricin-like"/>
    <property type="match status" value="1"/>
</dbReference>
<dbReference type="CDD" id="cd04280">
    <property type="entry name" value="ZnMc_astacin_like"/>
    <property type="match status" value="1"/>
</dbReference>
<dbReference type="Gene3D" id="2.80.10.50">
    <property type="match status" value="2"/>
</dbReference>
<dbReference type="Gene3D" id="3.40.390.10">
    <property type="entry name" value="Collagenase (Catalytic Domain)"/>
    <property type="match status" value="1"/>
</dbReference>
<dbReference type="InterPro" id="IPR034035">
    <property type="entry name" value="Astacin-like_dom"/>
</dbReference>
<dbReference type="InterPro" id="IPR024079">
    <property type="entry name" value="MetalloPept_cat_dom_sf"/>
</dbReference>
<dbReference type="InterPro" id="IPR001506">
    <property type="entry name" value="Peptidase_M12A"/>
</dbReference>
<dbReference type="InterPro" id="IPR006026">
    <property type="entry name" value="Peptidase_Metallo"/>
</dbReference>
<dbReference type="InterPro" id="IPR035992">
    <property type="entry name" value="Ricin_B-like_lectins"/>
</dbReference>
<dbReference type="InterPro" id="IPR000772">
    <property type="entry name" value="Ricin_B_lectin"/>
</dbReference>
<dbReference type="PANTHER" id="PTHR10127">
    <property type="entry name" value="DISCOIDIN, CUB, EGF, LAMININ , AND ZINC METALLOPROTEASE DOMAIN CONTAINING"/>
    <property type="match status" value="1"/>
</dbReference>
<dbReference type="PANTHER" id="PTHR10127:SF780">
    <property type="entry name" value="METALLOENDOPEPTIDASE"/>
    <property type="match status" value="1"/>
</dbReference>
<dbReference type="Pfam" id="PF01400">
    <property type="entry name" value="Astacin"/>
    <property type="match status" value="1"/>
</dbReference>
<dbReference type="Pfam" id="PF14200">
    <property type="entry name" value="RicinB_lectin_2"/>
    <property type="match status" value="1"/>
</dbReference>
<dbReference type="PRINTS" id="PR00480">
    <property type="entry name" value="ASTACIN"/>
</dbReference>
<dbReference type="SMART" id="SM00458">
    <property type="entry name" value="RICIN"/>
    <property type="match status" value="1"/>
</dbReference>
<dbReference type="SMART" id="SM00235">
    <property type="entry name" value="ZnMc"/>
    <property type="match status" value="1"/>
</dbReference>
<dbReference type="SUPFAM" id="SSF55486">
    <property type="entry name" value="Metalloproteases ('zincins'), catalytic domain"/>
    <property type="match status" value="1"/>
</dbReference>
<dbReference type="SUPFAM" id="SSF50370">
    <property type="entry name" value="Ricin B-like lectins"/>
    <property type="match status" value="1"/>
</dbReference>
<dbReference type="PROSITE" id="PS51864">
    <property type="entry name" value="ASTACIN"/>
    <property type="match status" value="1"/>
</dbReference>
<dbReference type="PROSITE" id="PS50231">
    <property type="entry name" value="RICIN_B_LECTIN"/>
    <property type="match status" value="1"/>
</dbReference>
<dbReference type="PROSITE" id="PS00142">
    <property type="entry name" value="ZINC_PROTEASE"/>
    <property type="match status" value="1"/>
</dbReference>
<reference key="1">
    <citation type="journal article" date="1995" name="Arch. Biochem. Biophys.">
        <title>Molecular cloning and sequence analysis of flavastacin: an O-glycosylated prokaryotic zinc metalloendopeptidase.</title>
        <authorList>
            <person name="Tarentino A.L."/>
            <person name="Quinones G."/>
            <person name="Grimwood B.G."/>
            <person name="Hauer C.R."/>
            <person name="Plummer T.H. Jr."/>
        </authorList>
    </citation>
    <scope>NUCLEOTIDE SEQUENCE [GENOMIC DNA]</scope>
    <scope>PARTIAL PROTEIN SEQUENCE</scope>
</reference>
<reference key="2">
    <citation type="journal article" date="1995" name="J. Biol. Chem.">
        <title>Detailed structural analysis of a novel, specific O-linked glycan from the prokaryote Flavobacterium meningosepticum.</title>
        <authorList>
            <person name="Reinhold B.B."/>
            <person name="Hauer C.R."/>
            <person name="Plummer T.H. Jr."/>
            <person name="Reinhold V.N."/>
        </authorList>
    </citation>
    <scope>GLYCOSYLATION AT SER-355</scope>
</reference>
<name>FLVS_ELIME</name>
<proteinExistence type="evidence at protein level"/>